<organism>
    <name type="scientific">Borreliella burgdorferi (strain ATCC 35210 / DSM 4680 / CIP 102532 / B31)</name>
    <name type="common">Borrelia burgdorferi</name>
    <dbReference type="NCBI Taxonomy" id="224326"/>
    <lineage>
        <taxon>Bacteria</taxon>
        <taxon>Pseudomonadati</taxon>
        <taxon>Spirochaetota</taxon>
        <taxon>Spirochaetia</taxon>
        <taxon>Spirochaetales</taxon>
        <taxon>Borreliaceae</taxon>
        <taxon>Borreliella</taxon>
    </lineage>
</organism>
<reference key="1">
    <citation type="journal article" date="1997" name="Nature">
        <title>Genomic sequence of a Lyme disease spirochaete, Borrelia burgdorferi.</title>
        <authorList>
            <person name="Fraser C.M."/>
            <person name="Casjens S."/>
            <person name="Huang W.M."/>
            <person name="Sutton G.G."/>
            <person name="Clayton R.A."/>
            <person name="Lathigra R."/>
            <person name="White O."/>
            <person name="Ketchum K.A."/>
            <person name="Dodson R.J."/>
            <person name="Hickey E.K."/>
            <person name="Gwinn M.L."/>
            <person name="Dougherty B.A."/>
            <person name="Tomb J.-F."/>
            <person name="Fleischmann R.D."/>
            <person name="Richardson D.L."/>
            <person name="Peterson J.D."/>
            <person name="Kerlavage A.R."/>
            <person name="Quackenbush J."/>
            <person name="Salzberg S.L."/>
            <person name="Hanson M."/>
            <person name="van Vugt R."/>
            <person name="Palmer N."/>
            <person name="Adams M.D."/>
            <person name="Gocayne J.D."/>
            <person name="Weidman J.F."/>
            <person name="Utterback T.R."/>
            <person name="Watthey L."/>
            <person name="McDonald L.A."/>
            <person name="Artiach P."/>
            <person name="Bowman C."/>
            <person name="Garland S.A."/>
            <person name="Fujii C."/>
            <person name="Cotton M.D."/>
            <person name="Horst K."/>
            <person name="Roberts K.M."/>
            <person name="Hatch B."/>
            <person name="Smith H.O."/>
            <person name="Venter J.C."/>
        </authorList>
    </citation>
    <scope>NUCLEOTIDE SEQUENCE [LARGE SCALE GENOMIC DNA]</scope>
    <source>
        <strain>ATCC 35210 / DSM 4680 / CIP 102532 / B31</strain>
    </source>
</reference>
<protein>
    <recommendedName>
        <fullName>Ribosomal RNA small subunit methyltransferase E 1</fullName>
        <ecNumber>2.1.1.193</ecNumber>
    </recommendedName>
    <alternativeName>
        <fullName>16S rRNA m3U1498 methyltransferase 1</fullName>
    </alternativeName>
</protein>
<evidence type="ECO:0000250" key="1"/>
<evidence type="ECO:0000305" key="2"/>
<feature type="chain" id="PRO_0000176206" description="Ribosomal RNA small subunit methyltransferase E 1">
    <location>
        <begin position="1"/>
        <end position="238"/>
    </location>
</feature>
<sequence length="238" mass="27493">MNLMLITFNEFKTGISLNDTRAEHLVKILKLKDNDKFKFGILGEKNIYHCIYKKDKKLFFKKIFKVGESNKLKKLYVLIGMIRPIVAKRIIKELASIGTYKIIFFNTELTEKSYLNSKIFKNNDCEKHLIAGAMQGKITYLPKIKIIKNLKESLKYIQQENFEIKILLEKNSEKNLIDIEQINNAVIIVGPERGFTEKEKQLIAQYNFSPYSISTNTLRTETATIAASIITASKLINM</sequence>
<comment type="function">
    <text evidence="1">Specifically methylates the N3 position of the uracil ring of uridine 1498 (m3U1498) in 16S rRNA. Acts on the fully assembled 30S ribosomal subunit (By similarity).</text>
</comment>
<comment type="catalytic activity">
    <reaction>
        <text>uridine(1498) in 16S rRNA + S-adenosyl-L-methionine = N(3)-methyluridine(1498) in 16S rRNA + S-adenosyl-L-homocysteine + H(+)</text>
        <dbReference type="Rhea" id="RHEA:42920"/>
        <dbReference type="Rhea" id="RHEA-COMP:10283"/>
        <dbReference type="Rhea" id="RHEA-COMP:10284"/>
        <dbReference type="ChEBI" id="CHEBI:15378"/>
        <dbReference type="ChEBI" id="CHEBI:57856"/>
        <dbReference type="ChEBI" id="CHEBI:59789"/>
        <dbReference type="ChEBI" id="CHEBI:65315"/>
        <dbReference type="ChEBI" id="CHEBI:74502"/>
        <dbReference type="EC" id="2.1.1.193"/>
    </reaction>
</comment>
<comment type="subcellular location">
    <subcellularLocation>
        <location evidence="1">Cytoplasm</location>
    </subcellularLocation>
</comment>
<comment type="similarity">
    <text evidence="2">Belongs to the RNA methyltransferase RsmE family.</text>
</comment>
<keyword id="KW-0963">Cytoplasm</keyword>
<keyword id="KW-0489">Methyltransferase</keyword>
<keyword id="KW-1185">Reference proteome</keyword>
<keyword id="KW-0698">rRNA processing</keyword>
<keyword id="KW-0949">S-adenosyl-L-methionine</keyword>
<keyword id="KW-0808">Transferase</keyword>
<proteinExistence type="inferred from homology"/>
<accession>O51089</accession>
<name>RSME1_BORBU</name>
<gene>
    <name type="primary">rsmE1</name>
    <name type="ordered locus">BB_0062</name>
</gene>
<dbReference type="EC" id="2.1.1.193"/>
<dbReference type="EMBL" id="AE000783">
    <property type="protein sequence ID" value="AAC66455.1"/>
    <property type="molecule type" value="Genomic_DNA"/>
</dbReference>
<dbReference type="PIR" id="F70107">
    <property type="entry name" value="F70107"/>
</dbReference>
<dbReference type="RefSeq" id="NP_212196.1">
    <property type="nucleotide sequence ID" value="NC_001318.1"/>
</dbReference>
<dbReference type="RefSeq" id="WP_010889672.1">
    <property type="nucleotide sequence ID" value="NC_001318.1"/>
</dbReference>
<dbReference type="SMR" id="O51089"/>
<dbReference type="STRING" id="224326.BB_0062"/>
<dbReference type="PaxDb" id="224326-BB_0062"/>
<dbReference type="EnsemblBacteria" id="AAC66455">
    <property type="protein sequence ID" value="AAC66455"/>
    <property type="gene ID" value="BB_0062"/>
</dbReference>
<dbReference type="KEGG" id="bbu:BB_0062"/>
<dbReference type="PATRIC" id="fig|224326.49.peg.460"/>
<dbReference type="HOGENOM" id="CLU_067442_1_1_12"/>
<dbReference type="OrthoDB" id="362914at2"/>
<dbReference type="Proteomes" id="UP000001807">
    <property type="component" value="Chromosome"/>
</dbReference>
<dbReference type="GO" id="GO:0005737">
    <property type="term" value="C:cytoplasm"/>
    <property type="evidence" value="ECO:0007669"/>
    <property type="project" value="UniProtKB-SubCell"/>
</dbReference>
<dbReference type="GO" id="GO:0070042">
    <property type="term" value="F:rRNA (uridine-N3-)-methyltransferase activity"/>
    <property type="evidence" value="ECO:0007669"/>
    <property type="project" value="TreeGrafter"/>
</dbReference>
<dbReference type="GO" id="GO:0070475">
    <property type="term" value="P:rRNA base methylation"/>
    <property type="evidence" value="ECO:0007669"/>
    <property type="project" value="TreeGrafter"/>
</dbReference>
<dbReference type="CDD" id="cd18084">
    <property type="entry name" value="RsmE-like"/>
    <property type="match status" value="1"/>
</dbReference>
<dbReference type="Gene3D" id="3.40.1280.10">
    <property type="match status" value="1"/>
</dbReference>
<dbReference type="InterPro" id="IPR029028">
    <property type="entry name" value="Alpha/beta_knot_MTases"/>
</dbReference>
<dbReference type="InterPro" id="IPR006700">
    <property type="entry name" value="RsmE"/>
</dbReference>
<dbReference type="InterPro" id="IPR046886">
    <property type="entry name" value="RsmE_MTase_dom"/>
</dbReference>
<dbReference type="InterPro" id="IPR046887">
    <property type="entry name" value="RsmE_PUA-like"/>
</dbReference>
<dbReference type="InterPro" id="IPR029026">
    <property type="entry name" value="tRNA_m1G_MTases_N"/>
</dbReference>
<dbReference type="NCBIfam" id="NF008701">
    <property type="entry name" value="PRK11713.5-5"/>
    <property type="match status" value="1"/>
</dbReference>
<dbReference type="NCBIfam" id="TIGR00046">
    <property type="entry name" value="RsmE family RNA methyltransferase"/>
    <property type="match status" value="1"/>
</dbReference>
<dbReference type="PANTHER" id="PTHR30027:SF3">
    <property type="entry name" value="16S RRNA (URACIL(1498)-N(3))-METHYLTRANSFERASE"/>
    <property type="match status" value="1"/>
</dbReference>
<dbReference type="PANTHER" id="PTHR30027">
    <property type="entry name" value="RIBOSOMAL RNA SMALL SUBUNIT METHYLTRANSFERASE E"/>
    <property type="match status" value="1"/>
</dbReference>
<dbReference type="Pfam" id="PF04452">
    <property type="entry name" value="Methyltrans_RNA"/>
    <property type="match status" value="1"/>
</dbReference>
<dbReference type="Pfam" id="PF20260">
    <property type="entry name" value="PUA_4"/>
    <property type="match status" value="1"/>
</dbReference>
<dbReference type="PIRSF" id="PIRSF015601">
    <property type="entry name" value="MTase_slr0722"/>
    <property type="match status" value="1"/>
</dbReference>
<dbReference type="SUPFAM" id="SSF75217">
    <property type="entry name" value="alpha/beta knot"/>
    <property type="match status" value="1"/>
</dbReference>